<accession>Q63046</accession>
<name>RUNX1_RAT</name>
<protein>
    <recommendedName>
        <fullName>Runt-related transcription factor 1</fullName>
    </recommendedName>
    <alternativeName>
        <fullName>Acute myeloid leukemia 1 protein</fullName>
    </alternativeName>
    <alternativeName>
        <fullName>Core-binding factor subunit alpha-2</fullName>
        <shortName>CBF-alpha-2</shortName>
    </alternativeName>
    <alternativeName>
        <fullName>Oncogene AML-1</fullName>
    </alternativeName>
    <alternativeName>
        <fullName>Polyomavirus enhancer-binding protein 2 alpha B subunit</fullName>
        <shortName>PEA2-alpha B</shortName>
        <shortName>PEBP2-alpha B</shortName>
    </alternativeName>
</protein>
<evidence type="ECO:0000250" key="1"/>
<evidence type="ECO:0000250" key="2">
    <source>
        <dbReference type="UniProtKB" id="Q01196"/>
    </source>
</evidence>
<evidence type="ECO:0000250" key="3">
    <source>
        <dbReference type="UniProtKB" id="Q03347"/>
    </source>
</evidence>
<evidence type="ECO:0000255" key="4">
    <source>
        <dbReference type="PROSITE-ProRule" id="PRU00399"/>
    </source>
</evidence>
<evidence type="ECO:0000256" key="5">
    <source>
        <dbReference type="SAM" id="MobiDB-lite"/>
    </source>
</evidence>
<evidence type="ECO:0000269" key="6">
    <source>
    </source>
</evidence>
<evidence type="ECO:0007744" key="7">
    <source>
    </source>
</evidence>
<keyword id="KW-0007">Acetylation</keyword>
<keyword id="KW-0010">Activator</keyword>
<keyword id="KW-0238">DNA-binding</keyword>
<keyword id="KW-0488">Methylation</keyword>
<keyword id="KW-0539">Nucleus</keyword>
<keyword id="KW-0597">Phosphoprotein</keyword>
<keyword id="KW-1185">Reference proteome</keyword>
<keyword id="KW-0678">Repressor</keyword>
<keyword id="KW-0804">Transcription</keyword>
<keyword id="KW-0805">Transcription regulation</keyword>
<proteinExistence type="evidence at protein level"/>
<dbReference type="EMBL" id="L35271">
    <property type="protein sequence ID" value="AAA66191.1"/>
    <property type="molecule type" value="mRNA"/>
</dbReference>
<dbReference type="RefSeq" id="NP_059021.1">
    <property type="nucleotide sequence ID" value="NM_017325.2"/>
</dbReference>
<dbReference type="SMR" id="Q63046"/>
<dbReference type="BioGRID" id="248410">
    <property type="interactions" value="1"/>
</dbReference>
<dbReference type="ELM" id="Q63046"/>
<dbReference type="FunCoup" id="Q63046">
    <property type="interactions" value="314"/>
</dbReference>
<dbReference type="STRING" id="10116.ENSRNOP00000070750"/>
<dbReference type="GlyGen" id="Q63046">
    <property type="glycosylation" value="2 sites, 1 O-linked glycan (1 site)"/>
</dbReference>
<dbReference type="iPTMnet" id="Q63046"/>
<dbReference type="PhosphoSitePlus" id="Q63046"/>
<dbReference type="PaxDb" id="10116-ENSRNOP00000002313"/>
<dbReference type="Ensembl" id="ENSRNOT00000002313.5">
    <property type="protein sequence ID" value="ENSRNOP00000002313.3"/>
    <property type="gene ID" value="ENSRNOG00000001704.8"/>
</dbReference>
<dbReference type="GeneID" id="50662"/>
<dbReference type="KEGG" id="rno:50662"/>
<dbReference type="UCSC" id="RGD:2283">
    <property type="organism name" value="rat"/>
</dbReference>
<dbReference type="AGR" id="RGD:2283"/>
<dbReference type="CTD" id="861"/>
<dbReference type="RGD" id="2283">
    <property type="gene designation" value="Runx1"/>
</dbReference>
<dbReference type="eggNOG" id="KOG3982">
    <property type="taxonomic scope" value="Eukaryota"/>
</dbReference>
<dbReference type="GeneTree" id="ENSGT00940000159255"/>
<dbReference type="HOGENOM" id="CLU_032910_0_0_1"/>
<dbReference type="InParanoid" id="Q63046"/>
<dbReference type="OrthoDB" id="10029800at2759"/>
<dbReference type="PhylomeDB" id="Q63046"/>
<dbReference type="Reactome" id="R-RNO-549127">
    <property type="pathway name" value="Organic cation transport"/>
</dbReference>
<dbReference type="Reactome" id="R-RNO-8877330">
    <property type="pathway name" value="RUNX1 and FOXP3 control the development of regulatory T lymphocytes (Tregs)"/>
</dbReference>
<dbReference type="Reactome" id="R-RNO-8931987">
    <property type="pathway name" value="RUNX1 regulates estrogen receptor mediated transcription"/>
</dbReference>
<dbReference type="Reactome" id="R-RNO-8934593">
    <property type="pathway name" value="Regulation of RUNX1 Expression and Activity"/>
</dbReference>
<dbReference type="Reactome" id="R-RNO-8936459">
    <property type="pathway name" value="RUNX1 regulates genes involved in megakaryocyte differentiation and platelet function"/>
</dbReference>
<dbReference type="Reactome" id="R-RNO-8939236">
    <property type="pathway name" value="RUNX1 regulates transcription of genes involved in differentiation of HSCs"/>
</dbReference>
<dbReference type="Reactome" id="R-RNO-8939243">
    <property type="pathway name" value="RUNX1 interacts with co-factors whose precise effect on RUNX1 targets is not known"/>
</dbReference>
<dbReference type="Reactome" id="R-RNO-8939245">
    <property type="pathway name" value="RUNX1 regulates transcription of genes involved in BCR signaling"/>
</dbReference>
<dbReference type="Reactome" id="R-RNO-8939246">
    <property type="pathway name" value="RUNX1 regulates transcription of genes involved in differentiation of myeloid cells"/>
</dbReference>
<dbReference type="Reactome" id="R-RNO-8939247">
    <property type="pathway name" value="RUNX1 regulates transcription of genes involved in interleukin signaling"/>
</dbReference>
<dbReference type="Reactome" id="R-RNO-9018519">
    <property type="pathway name" value="Estrogen-dependent gene expression"/>
</dbReference>
<dbReference type="PRO" id="PR:Q63046"/>
<dbReference type="Proteomes" id="UP000002494">
    <property type="component" value="Chromosome 11"/>
</dbReference>
<dbReference type="Bgee" id="ENSRNOG00000001704">
    <property type="expression patterns" value="Expressed in thymus and 18 other cell types or tissues"/>
</dbReference>
<dbReference type="ExpressionAtlas" id="Q63046">
    <property type="expression patterns" value="baseline and differential"/>
</dbReference>
<dbReference type="GO" id="GO:0005604">
    <property type="term" value="C:basement membrane"/>
    <property type="evidence" value="ECO:0000266"/>
    <property type="project" value="RGD"/>
</dbReference>
<dbReference type="GO" id="GO:0000785">
    <property type="term" value="C:chromatin"/>
    <property type="evidence" value="ECO:0000314"/>
    <property type="project" value="RGD"/>
</dbReference>
<dbReference type="GO" id="GO:0016513">
    <property type="term" value="C:core-binding factor complex"/>
    <property type="evidence" value="ECO:0000304"/>
    <property type="project" value="UniProtKB"/>
</dbReference>
<dbReference type="GO" id="GO:0005634">
    <property type="term" value="C:nucleus"/>
    <property type="evidence" value="ECO:0000266"/>
    <property type="project" value="RGD"/>
</dbReference>
<dbReference type="GO" id="GO:0005524">
    <property type="term" value="F:ATP binding"/>
    <property type="evidence" value="ECO:0007669"/>
    <property type="project" value="InterPro"/>
</dbReference>
<dbReference type="GO" id="GO:0003677">
    <property type="term" value="F:DNA binding"/>
    <property type="evidence" value="ECO:0000266"/>
    <property type="project" value="RGD"/>
</dbReference>
<dbReference type="GO" id="GO:0001228">
    <property type="term" value="F:DNA-binding transcription activator activity, RNA polymerase II-specific"/>
    <property type="evidence" value="ECO:0000266"/>
    <property type="project" value="RGD"/>
</dbReference>
<dbReference type="GO" id="GO:0003700">
    <property type="term" value="F:DNA-binding transcription factor activity"/>
    <property type="evidence" value="ECO:0000266"/>
    <property type="project" value="RGD"/>
</dbReference>
<dbReference type="GO" id="GO:0000981">
    <property type="term" value="F:DNA-binding transcription factor activity, RNA polymerase II-specific"/>
    <property type="evidence" value="ECO:0000318"/>
    <property type="project" value="GO_Central"/>
</dbReference>
<dbReference type="GO" id="GO:0140297">
    <property type="term" value="F:DNA-binding transcription factor binding"/>
    <property type="evidence" value="ECO:0000266"/>
    <property type="project" value="RGD"/>
</dbReference>
<dbReference type="GO" id="GO:1990841">
    <property type="term" value="F:promoter-specific chromatin binding"/>
    <property type="evidence" value="ECO:0000314"/>
    <property type="project" value="RGD"/>
</dbReference>
<dbReference type="GO" id="GO:0000978">
    <property type="term" value="F:RNA polymerase II cis-regulatory region sequence-specific DNA binding"/>
    <property type="evidence" value="ECO:0000266"/>
    <property type="project" value="RGD"/>
</dbReference>
<dbReference type="GO" id="GO:0000977">
    <property type="term" value="F:RNA polymerase II transcription regulatory region sequence-specific DNA binding"/>
    <property type="evidence" value="ECO:0000266"/>
    <property type="project" value="RGD"/>
</dbReference>
<dbReference type="GO" id="GO:1990837">
    <property type="term" value="F:sequence-specific double-stranded DNA binding"/>
    <property type="evidence" value="ECO:0000314"/>
    <property type="project" value="RGD"/>
</dbReference>
<dbReference type="GO" id="GO:0000976">
    <property type="term" value="F:transcription cis-regulatory region binding"/>
    <property type="evidence" value="ECO:0000266"/>
    <property type="project" value="RGD"/>
</dbReference>
<dbReference type="GO" id="GO:0001222">
    <property type="term" value="F:transcription corepressor binding"/>
    <property type="evidence" value="ECO:0000266"/>
    <property type="project" value="RGD"/>
</dbReference>
<dbReference type="GO" id="GO:0048266">
    <property type="term" value="P:behavioral response to pain"/>
    <property type="evidence" value="ECO:0000266"/>
    <property type="project" value="RGD"/>
</dbReference>
<dbReference type="GO" id="GO:0071560">
    <property type="term" value="P:cellular response to transforming growth factor beta stimulus"/>
    <property type="evidence" value="ECO:0000266"/>
    <property type="project" value="RGD"/>
</dbReference>
<dbReference type="GO" id="GO:0007417">
    <property type="term" value="P:central nervous system development"/>
    <property type="evidence" value="ECO:0000266"/>
    <property type="project" value="RGD"/>
</dbReference>
<dbReference type="GO" id="GO:0002062">
    <property type="term" value="P:chondrocyte differentiation"/>
    <property type="evidence" value="ECO:0000318"/>
    <property type="project" value="GO_Central"/>
</dbReference>
<dbReference type="GO" id="GO:0060216">
    <property type="term" value="P:definitive hemopoiesis"/>
    <property type="evidence" value="ECO:0000266"/>
    <property type="project" value="RGD"/>
</dbReference>
<dbReference type="GO" id="GO:0035162">
    <property type="term" value="P:embryonic hemopoiesis"/>
    <property type="evidence" value="ECO:0000266"/>
    <property type="project" value="RGD"/>
</dbReference>
<dbReference type="GO" id="GO:0031069">
    <property type="term" value="P:hair follicle morphogenesis"/>
    <property type="evidence" value="ECO:0000266"/>
    <property type="project" value="RGD"/>
</dbReference>
<dbReference type="GO" id="GO:0030097">
    <property type="term" value="P:hemopoiesis"/>
    <property type="evidence" value="ECO:0000266"/>
    <property type="project" value="RGD"/>
</dbReference>
<dbReference type="GO" id="GO:0001701">
    <property type="term" value="P:in utero embryonic development"/>
    <property type="evidence" value="ECO:0000266"/>
    <property type="project" value="RGD"/>
</dbReference>
<dbReference type="GO" id="GO:0001889">
    <property type="term" value="P:liver development"/>
    <property type="evidence" value="ECO:0000266"/>
    <property type="project" value="RGD"/>
</dbReference>
<dbReference type="GO" id="GO:0030099">
    <property type="term" value="P:myeloid cell differentiation"/>
    <property type="evidence" value="ECO:0000266"/>
    <property type="project" value="RGD"/>
</dbReference>
<dbReference type="GO" id="GO:0002573">
    <property type="term" value="P:myeloid leukocyte differentiation"/>
    <property type="evidence" value="ECO:0000266"/>
    <property type="project" value="RGD"/>
</dbReference>
<dbReference type="GO" id="GO:0002318">
    <property type="term" value="P:myeloid progenitor cell differentiation"/>
    <property type="evidence" value="ECO:0000266"/>
    <property type="project" value="RGD"/>
</dbReference>
<dbReference type="GO" id="GO:0043371">
    <property type="term" value="P:negative regulation of CD4-positive, alpha-beta T cell differentiation"/>
    <property type="evidence" value="ECO:0000250"/>
    <property type="project" value="UniProtKB"/>
</dbReference>
<dbReference type="GO" id="GO:0008285">
    <property type="term" value="P:negative regulation of cell population proliferation"/>
    <property type="evidence" value="ECO:0000266"/>
    <property type="project" value="RGD"/>
</dbReference>
<dbReference type="GO" id="GO:0045892">
    <property type="term" value="P:negative regulation of DNA-templated transcription"/>
    <property type="evidence" value="ECO:0000266"/>
    <property type="project" value="RGD"/>
</dbReference>
<dbReference type="GO" id="GO:0000122">
    <property type="term" value="P:negative regulation of transcription by RNA polymerase II"/>
    <property type="evidence" value="ECO:0000250"/>
    <property type="project" value="UniProtKB"/>
</dbReference>
<dbReference type="GO" id="GO:0048666">
    <property type="term" value="P:neuron development"/>
    <property type="evidence" value="ECO:0000266"/>
    <property type="project" value="RGD"/>
</dbReference>
<dbReference type="GO" id="GO:0030182">
    <property type="term" value="P:neuron differentiation"/>
    <property type="evidence" value="ECO:0000266"/>
    <property type="project" value="RGD"/>
</dbReference>
<dbReference type="GO" id="GO:0048663">
    <property type="term" value="P:neuron fate commitment"/>
    <property type="evidence" value="ECO:0000266"/>
    <property type="project" value="RGD"/>
</dbReference>
<dbReference type="GO" id="GO:0001503">
    <property type="term" value="P:ossification"/>
    <property type="evidence" value="ECO:0000318"/>
    <property type="project" value="GO_Central"/>
</dbReference>
<dbReference type="GO" id="GO:0045766">
    <property type="term" value="P:positive regulation of angiogenesis"/>
    <property type="evidence" value="ECO:0000250"/>
    <property type="project" value="UniProtKB"/>
</dbReference>
<dbReference type="GO" id="GO:0043378">
    <property type="term" value="P:positive regulation of CD8-positive, alpha-beta T cell differentiation"/>
    <property type="evidence" value="ECO:0000250"/>
    <property type="project" value="UniProtKB"/>
</dbReference>
<dbReference type="GO" id="GO:1903431">
    <property type="term" value="P:positive regulation of cell maturation"/>
    <property type="evidence" value="ECO:0000266"/>
    <property type="project" value="RGD"/>
</dbReference>
<dbReference type="GO" id="GO:0045893">
    <property type="term" value="P:positive regulation of DNA-templated transcription"/>
    <property type="evidence" value="ECO:0000315"/>
    <property type="project" value="RGD"/>
</dbReference>
<dbReference type="GO" id="GO:0030854">
    <property type="term" value="P:positive regulation of granulocyte differentiation"/>
    <property type="evidence" value="ECO:0000250"/>
    <property type="project" value="UniProtKB"/>
</dbReference>
<dbReference type="GO" id="GO:0032743">
    <property type="term" value="P:positive regulation of interleukin-2 production"/>
    <property type="evidence" value="ECO:0000266"/>
    <property type="project" value="RGD"/>
</dbReference>
<dbReference type="GO" id="GO:2000872">
    <property type="term" value="P:positive regulation of progesterone secretion"/>
    <property type="evidence" value="ECO:0000315"/>
    <property type="project" value="RGD"/>
</dbReference>
<dbReference type="GO" id="GO:0045944">
    <property type="term" value="P:positive regulation of transcription by RNA polymerase II"/>
    <property type="evidence" value="ECO:0000315"/>
    <property type="project" value="RGD"/>
</dbReference>
<dbReference type="GO" id="GO:0032729">
    <property type="term" value="P:positive regulation of type II interferon production"/>
    <property type="evidence" value="ECO:0000266"/>
    <property type="project" value="RGD"/>
</dbReference>
<dbReference type="GO" id="GO:0045595">
    <property type="term" value="P:regulation of cell differentiation"/>
    <property type="evidence" value="ECO:0000318"/>
    <property type="project" value="GO_Central"/>
</dbReference>
<dbReference type="GO" id="GO:0006355">
    <property type="term" value="P:regulation of DNA-templated transcription"/>
    <property type="evidence" value="ECO:0000266"/>
    <property type="project" value="RGD"/>
</dbReference>
<dbReference type="GO" id="GO:0071336">
    <property type="term" value="P:regulation of hair follicle cell proliferation"/>
    <property type="evidence" value="ECO:0000266"/>
    <property type="project" value="RGD"/>
</dbReference>
<dbReference type="GO" id="GO:0009966">
    <property type="term" value="P:regulation of signal transduction"/>
    <property type="evidence" value="ECO:0000266"/>
    <property type="project" value="RGD"/>
</dbReference>
<dbReference type="GO" id="GO:0002667">
    <property type="term" value="P:regulation of T cell anergy"/>
    <property type="evidence" value="ECO:0000266"/>
    <property type="project" value="RGD"/>
</dbReference>
<dbReference type="GO" id="GO:0006357">
    <property type="term" value="P:regulation of transcription by RNA polymerase II"/>
    <property type="evidence" value="ECO:0000318"/>
    <property type="project" value="GO_Central"/>
</dbReference>
<dbReference type="GO" id="GO:0014894">
    <property type="term" value="P:response to denervation involved in regulation of muscle adaptation"/>
    <property type="evidence" value="ECO:0000270"/>
    <property type="project" value="RGD"/>
</dbReference>
<dbReference type="GO" id="GO:0032526">
    <property type="term" value="P:response to retinoic acid"/>
    <property type="evidence" value="ECO:0000266"/>
    <property type="project" value="RGD"/>
</dbReference>
<dbReference type="GO" id="GO:0001501">
    <property type="term" value="P:skeletal system development"/>
    <property type="evidence" value="ECO:0000266"/>
    <property type="project" value="RGD"/>
</dbReference>
<dbReference type="FunFam" id="2.60.40.720:FF:000001">
    <property type="entry name" value="Runt-related transcription factor"/>
    <property type="match status" value="1"/>
</dbReference>
<dbReference type="FunFam" id="4.10.770.10:FF:000002">
    <property type="entry name" value="Runt-related transcription factor"/>
    <property type="match status" value="1"/>
</dbReference>
<dbReference type="Gene3D" id="2.60.40.720">
    <property type="match status" value="1"/>
</dbReference>
<dbReference type="Gene3D" id="4.10.770.10">
    <property type="entry name" value="Signal Protein Aml-1b, Chain A, domain 3"/>
    <property type="match status" value="1"/>
</dbReference>
<dbReference type="InterPro" id="IPR000040">
    <property type="entry name" value="AML1_Runt"/>
</dbReference>
<dbReference type="InterPro" id="IPR008967">
    <property type="entry name" value="p53-like_TF_DNA-bd_sf"/>
</dbReference>
<dbReference type="InterPro" id="IPR012346">
    <property type="entry name" value="p53/RUNT-type_TF_DNA-bd_sf"/>
</dbReference>
<dbReference type="InterPro" id="IPR013524">
    <property type="entry name" value="Runt_dom"/>
</dbReference>
<dbReference type="InterPro" id="IPR027384">
    <property type="entry name" value="Runx_central_dom_sf"/>
</dbReference>
<dbReference type="InterPro" id="IPR013711">
    <property type="entry name" value="RunxI_C_dom"/>
</dbReference>
<dbReference type="InterPro" id="IPR016554">
    <property type="entry name" value="TF_Runt-rel_RUNX"/>
</dbReference>
<dbReference type="PANTHER" id="PTHR11950">
    <property type="entry name" value="RUNT RELATED"/>
    <property type="match status" value="1"/>
</dbReference>
<dbReference type="PANTHER" id="PTHR11950:SF40">
    <property type="entry name" value="RUNT-RELATED TRANSCRIPTION FACTOR 1"/>
    <property type="match status" value="1"/>
</dbReference>
<dbReference type="Pfam" id="PF00853">
    <property type="entry name" value="Runt"/>
    <property type="match status" value="1"/>
</dbReference>
<dbReference type="Pfam" id="PF08504">
    <property type="entry name" value="RunxI"/>
    <property type="match status" value="1"/>
</dbReference>
<dbReference type="PIRSF" id="PIRSF009374">
    <property type="entry name" value="TF_Runt-rel_RUNX"/>
    <property type="match status" value="1"/>
</dbReference>
<dbReference type="PRINTS" id="PR00967">
    <property type="entry name" value="ONCOGENEAML1"/>
</dbReference>
<dbReference type="SUPFAM" id="SSF49417">
    <property type="entry name" value="p53-like transcription factors"/>
    <property type="match status" value="1"/>
</dbReference>
<dbReference type="PROSITE" id="PS51062">
    <property type="entry name" value="RUNT"/>
    <property type="match status" value="1"/>
</dbReference>
<gene>
    <name type="primary">Runx1</name>
    <name type="synonym">Aml1</name>
    <name type="synonym">Cbfa2</name>
</gene>
<organism>
    <name type="scientific">Rattus norvegicus</name>
    <name type="common">Rat</name>
    <dbReference type="NCBI Taxonomy" id="10116"/>
    <lineage>
        <taxon>Eukaryota</taxon>
        <taxon>Metazoa</taxon>
        <taxon>Chordata</taxon>
        <taxon>Craniata</taxon>
        <taxon>Vertebrata</taxon>
        <taxon>Euteleostomi</taxon>
        <taxon>Mammalia</taxon>
        <taxon>Eutheria</taxon>
        <taxon>Euarchontoglires</taxon>
        <taxon>Glires</taxon>
        <taxon>Rodentia</taxon>
        <taxon>Myomorpha</taxon>
        <taxon>Muroidea</taxon>
        <taxon>Muridae</taxon>
        <taxon>Murinae</taxon>
        <taxon>Rattus</taxon>
    </lineage>
</organism>
<sequence length="450" mass="48556">MRIPVDASTSRRFTPPSTALSPGKMSEALPLGAPDGGAALASKLRSGDRSMVEVLADHPGELVRTDSPNFLCSVLPTHWRCNKTLPIAFKVVALGDVPDGTLVTVMAGNDENYSAELRNATAAMKNQVARFNDLRFVGRSGRGKSFTLTITVFTNPPQVATYHRAIKITVDGPREPRRHRQKLDDQTKPGSLSFSERLSELEQLRRTAMRVSPHHPAPTPNPRASLNHSTAFNPQPQSQMQDARQIQPSPPWSYDQSYQYLGSITSSVHPATPISPGRASGMTSLSAELSSRLSTAPDLTAFGDPRQFPTLPSISDPRMHYPGAFTYSPPVTSGIGIGMSAMSSTSRYHTYLPPPYPGSSQAQAGPFQTGSPSYHLYYGTSAGSYQFSMVGGERSPPRILPPCTNASTGAALLNPSLPSQSDVVETEGSHSNSPTNMPPARLEEAVWRPY</sequence>
<feature type="chain" id="PRO_0000174657" description="Runt-related transcription factor 1">
    <location>
        <begin position="1"/>
        <end position="450"/>
    </location>
</feature>
<feature type="domain" description="Runt" evidence="4">
    <location>
        <begin position="50"/>
        <end position="178"/>
    </location>
</feature>
<feature type="region of interest" description="Disordered" evidence="5">
    <location>
        <begin position="1"/>
        <end position="25"/>
    </location>
</feature>
<feature type="region of interest" description="Interaction with DNA" evidence="1">
    <location>
        <begin position="80"/>
        <end position="84"/>
    </location>
</feature>
<feature type="region of interest" description="Interaction with DNA" evidence="1">
    <location>
        <begin position="135"/>
        <end position="143"/>
    </location>
</feature>
<feature type="region of interest" description="Interaction with DNA" evidence="1">
    <location>
        <begin position="168"/>
        <end position="177"/>
    </location>
</feature>
<feature type="region of interest" description="Disordered" evidence="5">
    <location>
        <begin position="170"/>
        <end position="195"/>
    </location>
</feature>
<feature type="region of interest" description="Disordered" evidence="5">
    <location>
        <begin position="209"/>
        <end position="252"/>
    </location>
</feature>
<feature type="region of interest" description="Interaction with KAT6A" evidence="1">
    <location>
        <begin position="290"/>
        <end position="369"/>
    </location>
</feature>
<feature type="region of interest" description="Interaction with KAT6B" evidence="1">
    <location>
        <begin position="306"/>
        <end position="398"/>
    </location>
</feature>
<feature type="region of interest" description="Interaction with FOXP3" evidence="2">
    <location>
        <begin position="360"/>
        <end position="400"/>
    </location>
</feature>
<feature type="region of interest" description="Disordered" evidence="5">
    <location>
        <begin position="410"/>
        <end position="450"/>
    </location>
</feature>
<feature type="compositionally biased region" description="Polar residues" evidence="5">
    <location>
        <begin position="7"/>
        <end position="20"/>
    </location>
</feature>
<feature type="compositionally biased region" description="Polar residues" evidence="5">
    <location>
        <begin position="222"/>
        <end position="247"/>
    </location>
</feature>
<feature type="compositionally biased region" description="Polar residues" evidence="5">
    <location>
        <begin position="416"/>
        <end position="435"/>
    </location>
</feature>
<feature type="compositionally biased region" description="Basic and acidic residues" evidence="5">
    <location>
        <begin position="441"/>
        <end position="450"/>
    </location>
</feature>
<feature type="binding site" evidence="4">
    <location>
        <position position="112"/>
    </location>
    <ligand>
        <name>chloride</name>
        <dbReference type="ChEBI" id="CHEBI:17996"/>
        <label>1</label>
    </ligand>
</feature>
<feature type="binding site" evidence="4">
    <location>
        <position position="116"/>
    </location>
    <ligand>
        <name>chloride</name>
        <dbReference type="ChEBI" id="CHEBI:17996"/>
        <label>1</label>
    </ligand>
</feature>
<feature type="binding site" evidence="4">
    <location>
        <position position="139"/>
    </location>
    <ligand>
        <name>chloride</name>
        <dbReference type="ChEBI" id="CHEBI:17996"/>
        <label>2</label>
    </ligand>
</feature>
<feature type="binding site" evidence="4">
    <location>
        <position position="170"/>
    </location>
    <ligand>
        <name>chloride</name>
        <dbReference type="ChEBI" id="CHEBI:17996"/>
        <label>2</label>
    </ligand>
</feature>
<feature type="modified residue" description="Phosphothreonine" evidence="7">
    <location>
        <position position="14"/>
    </location>
</feature>
<feature type="modified residue" description="Phosphoserine" evidence="7">
    <location>
        <position position="21"/>
    </location>
</feature>
<feature type="modified residue" description="N6-acetyllysine" evidence="2">
    <location>
        <position position="24"/>
    </location>
</feature>
<feature type="modified residue" description="N6-acetyllysine" evidence="2">
    <location>
        <position position="43"/>
    </location>
</feature>
<feature type="modified residue" description="Phosphoserine" evidence="2">
    <location>
        <position position="193"/>
    </location>
</feature>
<feature type="modified residue" description="Phosphoserine" evidence="2">
    <location>
        <position position="212"/>
    </location>
</feature>
<feature type="modified residue" description="Phosphoserine; by HIPK2" evidence="2">
    <location>
        <position position="249"/>
    </location>
</feature>
<feature type="modified residue" description="Phosphoserine" evidence="2">
    <location>
        <position position="266"/>
    </location>
</feature>
<feature type="modified residue" description="Phosphoserine" evidence="2">
    <location>
        <position position="267"/>
    </location>
</feature>
<feature type="modified residue" description="Phosphothreonine; by HIPK2" evidence="2">
    <location>
        <position position="272"/>
    </location>
</feature>
<feature type="modified residue" description="Phosphoserine; by HIPK2" evidence="2">
    <location>
        <position position="275"/>
    </location>
</feature>
<feature type="modified residue" description="Phosphothreonine" evidence="2">
    <location>
        <position position="295"/>
    </location>
</feature>
<feature type="modified residue" description="Phosphoserine" evidence="2">
    <location>
        <position position="433"/>
    </location>
</feature>
<comment type="function">
    <text evidence="2 3">CBF binds to the core site, 5'-PYGPYGGT-3', of a number of enhancers and promoters, including murine leukemia virus, polyomavirus enhancer, T-cell receptor enhancers, LCK, IL-3 and GM-CSF promoters. The alpha subunit binds DNA and appears to have a role in the development of normal hematopoiesis. Isoform AML-1L interferes with the transactivation activity of RUNX1. Acts synergistically with ELF4 to transactivate the IL-3 promoter and with ELF2 to transactivate the BLK promoter. Inhibits KAT6B-dependent transcriptional activation. Controls the anergy and suppressive function of regulatory T-cells (Treg) by associating with FOXP3. Activates the expression of IL2 and IFNG and down-regulates the expression of TNFRSF18, IL2RA and CTLA4, in conventional T-cells (By similarity). Positively regulates the expression of RORC in T-helper 17 cells (By similarity).</text>
</comment>
<comment type="subunit">
    <text evidence="2 3">Heterodimer with CBFB. RUNX1 binds DNA as a monomer and through the Runt domain. DNA-binding is increased by heterodimerization. Interacts with TLE1 and ALYREF/THOC4. Interacts with ELF1, ELF2 and SPI1. Interacts via its Runt domain with the ELF4 N-terminal region. Interaction with ELF2 isoform 2 (NERF-1a) may act to repress RUNX1-mediated transactivation. Interacts with KAT6A and KAT6B. Interacts with SUV39H1, leading to abrogation of transactivating and DNA-binding properties of RUNX1. Interacts with YAP1 and HIPK2. Interaction with CDK6 prevents myeloid differentiation, reducing its transcription transactivation activity. Found in a complex with PRMT5, RUNX1 and CBFB. Interacts with FOXP3. Interacts with TBX21. Interacts with DPF2 (By similarity).</text>
</comment>
<comment type="subcellular location">
    <subcellularLocation>
        <location>Nucleus</location>
    </subcellularLocation>
</comment>
<comment type="tissue specificity">
    <text evidence="6">Expressed in skeletal muscle.</text>
</comment>
<comment type="induction">
    <text evidence="6">Expression increases following denervation.</text>
</comment>
<comment type="domain">
    <text>A proline/serine/threonine rich region at the C-terminus is necessary for transcriptional activation of target genes.</text>
</comment>
<comment type="PTM">
    <text evidence="1">Phosphorylated in its C-terminus upon IL-6 treatment. Phosphorylation enhances interaction with KAT6A (By similarity).</text>
</comment>
<comment type="PTM">
    <text evidence="1">Methylated.</text>
</comment>
<comment type="PTM">
    <text evidence="1">Phosphorylated in Ser-249 Thr-272 and Ser-275 by HIPK2 when associated with CBFB and DNA. This phosphorylation promotes subsequent EP300 phosphorylation (By similarity).</text>
</comment>
<reference key="1">
    <citation type="journal article" date="1994" name="Mol. Cell. Biol.">
        <title>AML1 is expressed in skeletal muscle and is regulated by innervation.</title>
        <authorList>
            <person name="Zhu X."/>
            <person name="Yeadon J.E."/>
            <person name="Burden S.J."/>
        </authorList>
    </citation>
    <scope>NUCLEOTIDE SEQUENCE [MRNA]</scope>
    <scope>TISSUE SPECIFICITY</scope>
    <scope>INDUCTION</scope>
    <source>
        <strain>Sprague-Dawley</strain>
        <tissue>Skeletal muscle</tissue>
    </source>
</reference>
<reference key="2">
    <citation type="journal article" date="2012" name="Nat. Commun.">
        <title>Quantitative maps of protein phosphorylation sites across 14 different rat organs and tissues.</title>
        <authorList>
            <person name="Lundby A."/>
            <person name="Secher A."/>
            <person name="Lage K."/>
            <person name="Nordsborg N.B."/>
            <person name="Dmytriyev A."/>
            <person name="Lundby C."/>
            <person name="Olsen J.V."/>
        </authorList>
    </citation>
    <scope>PHOSPHORYLATION [LARGE SCALE ANALYSIS] AT THR-14 AND SER-21</scope>
    <scope>IDENTIFICATION BY MASS SPECTROMETRY [LARGE SCALE ANALYSIS]</scope>
</reference>